<evidence type="ECO:0000255" key="1">
    <source>
        <dbReference type="HAMAP-Rule" id="MF_00213"/>
    </source>
</evidence>
<comment type="function">
    <text evidence="1">Involved in the maturation of [NiFe] hydrogenases. Required for nickel insertion into the metal center of the hydrogenase.</text>
</comment>
<comment type="similarity">
    <text evidence="1">Belongs to the HypA/HybF family.</text>
</comment>
<keyword id="KW-0479">Metal-binding</keyword>
<keyword id="KW-0533">Nickel</keyword>
<keyword id="KW-0862">Zinc</keyword>
<dbReference type="EMBL" id="CP001336">
    <property type="protein sequence ID" value="ACL22937.1"/>
    <property type="molecule type" value="Genomic_DNA"/>
</dbReference>
<dbReference type="RefSeq" id="WP_011462320.1">
    <property type="nucleotide sequence ID" value="NC_011830.1"/>
</dbReference>
<dbReference type="SMR" id="B8G0K1"/>
<dbReference type="KEGG" id="dhd:Dhaf_4944"/>
<dbReference type="HOGENOM" id="CLU_126929_0_0_9"/>
<dbReference type="Proteomes" id="UP000007726">
    <property type="component" value="Chromosome"/>
</dbReference>
<dbReference type="GO" id="GO:0016151">
    <property type="term" value="F:nickel cation binding"/>
    <property type="evidence" value="ECO:0007669"/>
    <property type="project" value="UniProtKB-UniRule"/>
</dbReference>
<dbReference type="GO" id="GO:0008270">
    <property type="term" value="F:zinc ion binding"/>
    <property type="evidence" value="ECO:0007669"/>
    <property type="project" value="UniProtKB-UniRule"/>
</dbReference>
<dbReference type="GO" id="GO:0051604">
    <property type="term" value="P:protein maturation"/>
    <property type="evidence" value="ECO:0007669"/>
    <property type="project" value="InterPro"/>
</dbReference>
<dbReference type="GO" id="GO:0036211">
    <property type="term" value="P:protein modification process"/>
    <property type="evidence" value="ECO:0007669"/>
    <property type="project" value="UniProtKB-UniRule"/>
</dbReference>
<dbReference type="Gene3D" id="3.30.2320.80">
    <property type="match status" value="1"/>
</dbReference>
<dbReference type="HAMAP" id="MF_00213">
    <property type="entry name" value="HypA_HybF"/>
    <property type="match status" value="1"/>
</dbReference>
<dbReference type="InterPro" id="IPR000688">
    <property type="entry name" value="HypA/HybF"/>
</dbReference>
<dbReference type="NCBIfam" id="TIGR00100">
    <property type="entry name" value="hypA"/>
    <property type="match status" value="1"/>
</dbReference>
<dbReference type="PANTHER" id="PTHR34535">
    <property type="entry name" value="HYDROGENASE MATURATION FACTOR HYPA"/>
    <property type="match status" value="1"/>
</dbReference>
<dbReference type="PANTHER" id="PTHR34535:SF3">
    <property type="entry name" value="HYDROGENASE MATURATION FACTOR HYPA"/>
    <property type="match status" value="1"/>
</dbReference>
<dbReference type="Pfam" id="PF01155">
    <property type="entry name" value="HypA"/>
    <property type="match status" value="1"/>
</dbReference>
<dbReference type="PIRSF" id="PIRSF004761">
    <property type="entry name" value="Hydrgn_mat_HypA"/>
    <property type="match status" value="1"/>
</dbReference>
<proteinExistence type="inferred from homology"/>
<feature type="chain" id="PRO_1000124774" description="Hydrogenase maturation factor HypA">
    <location>
        <begin position="1"/>
        <end position="114"/>
    </location>
</feature>
<feature type="binding site" evidence="1">
    <location>
        <position position="2"/>
    </location>
    <ligand>
        <name>Ni(2+)</name>
        <dbReference type="ChEBI" id="CHEBI:49786"/>
    </ligand>
</feature>
<feature type="binding site" evidence="1">
    <location>
        <position position="73"/>
    </location>
    <ligand>
        <name>Zn(2+)</name>
        <dbReference type="ChEBI" id="CHEBI:29105"/>
    </ligand>
</feature>
<feature type="binding site" evidence="1">
    <location>
        <position position="76"/>
    </location>
    <ligand>
        <name>Zn(2+)</name>
        <dbReference type="ChEBI" id="CHEBI:29105"/>
    </ligand>
</feature>
<feature type="binding site" evidence="1">
    <location>
        <position position="89"/>
    </location>
    <ligand>
        <name>Zn(2+)</name>
        <dbReference type="ChEBI" id="CHEBI:29105"/>
    </ligand>
</feature>
<feature type="binding site" evidence="1">
    <location>
        <position position="92"/>
    </location>
    <ligand>
        <name>Zn(2+)</name>
        <dbReference type="ChEBI" id="CHEBI:29105"/>
    </ligand>
</feature>
<name>HYPA_DESHD</name>
<accession>B8G0K1</accession>
<gene>
    <name evidence="1" type="primary">hypA</name>
    <name type="ordered locus">Dhaf_4944</name>
</gene>
<reference key="1">
    <citation type="journal article" date="2012" name="BMC Microbiol.">
        <title>Genome sequence of Desulfitobacterium hafniense DCB-2, a Gram-positive anaerobe capable of dehalogenation and metal reduction.</title>
        <authorList>
            <person name="Kim S.H."/>
            <person name="Harzman C."/>
            <person name="Davis J.K."/>
            <person name="Hutcheson R."/>
            <person name="Broderick J.B."/>
            <person name="Marsh T.L."/>
            <person name="Tiedje J.M."/>
        </authorList>
    </citation>
    <scope>NUCLEOTIDE SEQUENCE [LARGE SCALE GENOMIC DNA]</scope>
    <source>
        <strain>DSM 10664 / DCB-2</strain>
    </source>
</reference>
<sequence length="114" mass="12451">MHEMSLMGGVFEAIEATLAHHHVKKVLLVKLKIGQLTNAEPDALQMAFAAFAQGTVCEGAELQIEMLPVKGRCRSCSEEFMVPGLIFACPVCQHLGIDITQGEELLLESLEVEE</sequence>
<organism>
    <name type="scientific">Desulfitobacterium hafniense (strain DSM 10664 / DCB-2)</name>
    <dbReference type="NCBI Taxonomy" id="272564"/>
    <lineage>
        <taxon>Bacteria</taxon>
        <taxon>Bacillati</taxon>
        <taxon>Bacillota</taxon>
        <taxon>Clostridia</taxon>
        <taxon>Eubacteriales</taxon>
        <taxon>Desulfitobacteriaceae</taxon>
        <taxon>Desulfitobacterium</taxon>
    </lineage>
</organism>
<protein>
    <recommendedName>
        <fullName evidence="1">Hydrogenase maturation factor HypA</fullName>
    </recommendedName>
</protein>